<reference key="1">
    <citation type="journal article" date="2004" name="Nucleic Acids Res.">
        <title>The genome sequence of Bacillus cereus ATCC 10987 reveals metabolic adaptations and a large plasmid related to Bacillus anthracis pXO1.</title>
        <authorList>
            <person name="Rasko D.A."/>
            <person name="Ravel J."/>
            <person name="Oekstad O.A."/>
            <person name="Helgason E."/>
            <person name="Cer R.Z."/>
            <person name="Jiang L."/>
            <person name="Shores K.A."/>
            <person name="Fouts D.E."/>
            <person name="Tourasse N.J."/>
            <person name="Angiuoli S.V."/>
            <person name="Kolonay J.F."/>
            <person name="Nelson W.C."/>
            <person name="Kolstoe A.-B."/>
            <person name="Fraser C.M."/>
            <person name="Read T.D."/>
        </authorList>
    </citation>
    <scope>NUCLEOTIDE SEQUENCE [LARGE SCALE GENOMIC DNA]</scope>
    <source>
        <strain>ATCC 10987 / NRS 248</strain>
    </source>
</reference>
<sequence>MKLHELKPAEGSRKVRNRVGRGIGSGNGKTAGKGHKGQNARSGGGVRLGFEGGQTPLFRRLPKRGFTNINRKEFAIVNLSTLNRFEDGTEVTPELLLETGVISKLNDGVKILASGAVEKKLTVKAHKFSSSAKEAIEAAGGSVEVI</sequence>
<name>RL15_BACC1</name>
<accession>Q73F77</accession>
<proteinExistence type="inferred from homology"/>
<organism>
    <name type="scientific">Bacillus cereus (strain ATCC 10987 / NRS 248)</name>
    <dbReference type="NCBI Taxonomy" id="222523"/>
    <lineage>
        <taxon>Bacteria</taxon>
        <taxon>Bacillati</taxon>
        <taxon>Bacillota</taxon>
        <taxon>Bacilli</taxon>
        <taxon>Bacillales</taxon>
        <taxon>Bacillaceae</taxon>
        <taxon>Bacillus</taxon>
        <taxon>Bacillus cereus group</taxon>
    </lineage>
</organism>
<gene>
    <name evidence="1" type="primary">rplO</name>
    <name type="ordered locus">BCE_0129</name>
</gene>
<evidence type="ECO:0000255" key="1">
    <source>
        <dbReference type="HAMAP-Rule" id="MF_01341"/>
    </source>
</evidence>
<evidence type="ECO:0000256" key="2">
    <source>
        <dbReference type="SAM" id="MobiDB-lite"/>
    </source>
</evidence>
<evidence type="ECO:0000305" key="3"/>
<dbReference type="EMBL" id="AE017194">
    <property type="protein sequence ID" value="AAS39065.1"/>
    <property type="molecule type" value="Genomic_DNA"/>
</dbReference>
<dbReference type="SMR" id="Q73F77"/>
<dbReference type="KEGG" id="bca:BCE_0129"/>
<dbReference type="HOGENOM" id="CLU_055188_4_2_9"/>
<dbReference type="Proteomes" id="UP000002527">
    <property type="component" value="Chromosome"/>
</dbReference>
<dbReference type="GO" id="GO:0022625">
    <property type="term" value="C:cytosolic large ribosomal subunit"/>
    <property type="evidence" value="ECO:0007669"/>
    <property type="project" value="TreeGrafter"/>
</dbReference>
<dbReference type="GO" id="GO:0019843">
    <property type="term" value="F:rRNA binding"/>
    <property type="evidence" value="ECO:0007669"/>
    <property type="project" value="UniProtKB-UniRule"/>
</dbReference>
<dbReference type="GO" id="GO:0003735">
    <property type="term" value="F:structural constituent of ribosome"/>
    <property type="evidence" value="ECO:0007669"/>
    <property type="project" value="InterPro"/>
</dbReference>
<dbReference type="GO" id="GO:0006412">
    <property type="term" value="P:translation"/>
    <property type="evidence" value="ECO:0007669"/>
    <property type="project" value="UniProtKB-UniRule"/>
</dbReference>
<dbReference type="FunFam" id="3.100.10.10:FF:000004">
    <property type="entry name" value="50S ribosomal protein L15"/>
    <property type="match status" value="1"/>
</dbReference>
<dbReference type="Gene3D" id="3.100.10.10">
    <property type="match status" value="1"/>
</dbReference>
<dbReference type="HAMAP" id="MF_01341">
    <property type="entry name" value="Ribosomal_uL15"/>
    <property type="match status" value="1"/>
</dbReference>
<dbReference type="InterPro" id="IPR030878">
    <property type="entry name" value="Ribosomal_uL15"/>
</dbReference>
<dbReference type="InterPro" id="IPR021131">
    <property type="entry name" value="Ribosomal_uL15/eL18"/>
</dbReference>
<dbReference type="InterPro" id="IPR036227">
    <property type="entry name" value="Ribosomal_uL15/eL18_sf"/>
</dbReference>
<dbReference type="InterPro" id="IPR005749">
    <property type="entry name" value="Ribosomal_uL15_bac-type"/>
</dbReference>
<dbReference type="InterPro" id="IPR001196">
    <property type="entry name" value="Ribosomal_uL15_CS"/>
</dbReference>
<dbReference type="NCBIfam" id="TIGR01071">
    <property type="entry name" value="rplO_bact"/>
    <property type="match status" value="1"/>
</dbReference>
<dbReference type="PANTHER" id="PTHR12934">
    <property type="entry name" value="50S RIBOSOMAL PROTEIN L15"/>
    <property type="match status" value="1"/>
</dbReference>
<dbReference type="PANTHER" id="PTHR12934:SF11">
    <property type="entry name" value="LARGE RIBOSOMAL SUBUNIT PROTEIN UL15M"/>
    <property type="match status" value="1"/>
</dbReference>
<dbReference type="Pfam" id="PF00828">
    <property type="entry name" value="Ribosomal_L27A"/>
    <property type="match status" value="1"/>
</dbReference>
<dbReference type="SUPFAM" id="SSF52080">
    <property type="entry name" value="Ribosomal proteins L15p and L18e"/>
    <property type="match status" value="1"/>
</dbReference>
<dbReference type="PROSITE" id="PS00475">
    <property type="entry name" value="RIBOSOMAL_L15"/>
    <property type="match status" value="1"/>
</dbReference>
<feature type="chain" id="PRO_0000104667" description="Large ribosomal subunit protein uL15">
    <location>
        <begin position="1"/>
        <end position="146"/>
    </location>
</feature>
<feature type="region of interest" description="Disordered" evidence="2">
    <location>
        <begin position="1"/>
        <end position="52"/>
    </location>
</feature>
<feature type="compositionally biased region" description="Basic and acidic residues" evidence="2">
    <location>
        <begin position="1"/>
        <end position="13"/>
    </location>
</feature>
<feature type="compositionally biased region" description="Gly residues" evidence="2">
    <location>
        <begin position="21"/>
        <end position="31"/>
    </location>
</feature>
<feature type="compositionally biased region" description="Gly residues" evidence="2">
    <location>
        <begin position="42"/>
        <end position="52"/>
    </location>
</feature>
<comment type="function">
    <text evidence="1">Binds to the 23S rRNA.</text>
</comment>
<comment type="subunit">
    <text evidence="1">Part of the 50S ribosomal subunit.</text>
</comment>
<comment type="similarity">
    <text evidence="1">Belongs to the universal ribosomal protein uL15 family.</text>
</comment>
<protein>
    <recommendedName>
        <fullName evidence="1">Large ribosomal subunit protein uL15</fullName>
    </recommendedName>
    <alternativeName>
        <fullName evidence="3">50S ribosomal protein L15</fullName>
    </alternativeName>
</protein>
<keyword id="KW-0687">Ribonucleoprotein</keyword>
<keyword id="KW-0689">Ribosomal protein</keyword>
<keyword id="KW-0694">RNA-binding</keyword>
<keyword id="KW-0699">rRNA-binding</keyword>